<proteinExistence type="inferred from homology"/>
<gene>
    <name evidence="1" type="primary">hfq</name>
    <name type="ordered locus">BCAN_A1130</name>
</gene>
<evidence type="ECO:0000255" key="1">
    <source>
        <dbReference type="HAMAP-Rule" id="MF_00436"/>
    </source>
</evidence>
<evidence type="ECO:0000255" key="2">
    <source>
        <dbReference type="PROSITE-ProRule" id="PRU01346"/>
    </source>
</evidence>
<sequence length="78" mass="8854">MAERSQNLQDLFLNSVRKQKISLTIFLINGVKLTGIVTSFDNFCVLLRRDGHSQLVYKHAISTIMPSQPVQMFEGEEA</sequence>
<reference key="1">
    <citation type="submission" date="2007-10" db="EMBL/GenBank/DDBJ databases">
        <title>Brucella canis ATCC 23365 whole genome shotgun sequencing project.</title>
        <authorList>
            <person name="Setubal J.C."/>
            <person name="Bowns C."/>
            <person name="Boyle S."/>
            <person name="Crasta O.R."/>
            <person name="Czar M.J."/>
            <person name="Dharmanolla C."/>
            <person name="Gillespie J.J."/>
            <person name="Kenyon R.W."/>
            <person name="Lu J."/>
            <person name="Mane S."/>
            <person name="Mohapatra S."/>
            <person name="Nagrani S."/>
            <person name="Purkayastha A."/>
            <person name="Rajasimha H.K."/>
            <person name="Shallom J.M."/>
            <person name="Shallom S."/>
            <person name="Shukla M."/>
            <person name="Snyder E.E."/>
            <person name="Sobral B.W."/>
            <person name="Wattam A.R."/>
            <person name="Will R."/>
            <person name="Williams K."/>
            <person name="Yoo H."/>
            <person name="Bruce D."/>
            <person name="Detter C."/>
            <person name="Munk C."/>
            <person name="Brettin T.S."/>
        </authorList>
    </citation>
    <scope>NUCLEOTIDE SEQUENCE [LARGE SCALE GENOMIC DNA]</scope>
    <source>
        <strain>ATCC 23365 / NCTC 10854 / RM-666</strain>
    </source>
</reference>
<keyword id="KW-1185">Reference proteome</keyword>
<keyword id="KW-0694">RNA-binding</keyword>
<keyword id="KW-0346">Stress response</keyword>
<protein>
    <recommendedName>
        <fullName evidence="1">RNA-binding protein Hfq</fullName>
    </recommendedName>
</protein>
<organism>
    <name type="scientific">Brucella canis (strain ATCC 23365 / NCTC 10854 / RM-666)</name>
    <dbReference type="NCBI Taxonomy" id="483179"/>
    <lineage>
        <taxon>Bacteria</taxon>
        <taxon>Pseudomonadati</taxon>
        <taxon>Pseudomonadota</taxon>
        <taxon>Alphaproteobacteria</taxon>
        <taxon>Hyphomicrobiales</taxon>
        <taxon>Brucellaceae</taxon>
        <taxon>Brucella/Ochrobactrum group</taxon>
        <taxon>Brucella</taxon>
    </lineage>
</organism>
<dbReference type="EMBL" id="CP000872">
    <property type="protein sequence ID" value="ABX62179.1"/>
    <property type="molecule type" value="Genomic_DNA"/>
</dbReference>
<dbReference type="RefSeq" id="WP_002964239.1">
    <property type="nucleotide sequence ID" value="NC_010103.1"/>
</dbReference>
<dbReference type="SMR" id="A9M5C4"/>
<dbReference type="GeneID" id="97533634"/>
<dbReference type="KEGG" id="bcs:BCAN_A1130"/>
<dbReference type="HOGENOM" id="CLU_113688_0_0_5"/>
<dbReference type="PRO" id="PR:A9M5C4"/>
<dbReference type="Proteomes" id="UP000001385">
    <property type="component" value="Chromosome I"/>
</dbReference>
<dbReference type="GO" id="GO:0005829">
    <property type="term" value="C:cytosol"/>
    <property type="evidence" value="ECO:0007669"/>
    <property type="project" value="TreeGrafter"/>
</dbReference>
<dbReference type="GO" id="GO:0003723">
    <property type="term" value="F:RNA binding"/>
    <property type="evidence" value="ECO:0007669"/>
    <property type="project" value="UniProtKB-UniRule"/>
</dbReference>
<dbReference type="GO" id="GO:0006355">
    <property type="term" value="P:regulation of DNA-templated transcription"/>
    <property type="evidence" value="ECO:0007669"/>
    <property type="project" value="InterPro"/>
</dbReference>
<dbReference type="GO" id="GO:0043487">
    <property type="term" value="P:regulation of RNA stability"/>
    <property type="evidence" value="ECO:0007669"/>
    <property type="project" value="TreeGrafter"/>
</dbReference>
<dbReference type="GO" id="GO:0045974">
    <property type="term" value="P:regulation of translation, ncRNA-mediated"/>
    <property type="evidence" value="ECO:0007669"/>
    <property type="project" value="TreeGrafter"/>
</dbReference>
<dbReference type="CDD" id="cd01716">
    <property type="entry name" value="Hfq"/>
    <property type="match status" value="1"/>
</dbReference>
<dbReference type="Gene3D" id="2.30.30.100">
    <property type="match status" value="1"/>
</dbReference>
<dbReference type="HAMAP" id="MF_00436">
    <property type="entry name" value="Hfq"/>
    <property type="match status" value="1"/>
</dbReference>
<dbReference type="InterPro" id="IPR005001">
    <property type="entry name" value="Hfq"/>
</dbReference>
<dbReference type="InterPro" id="IPR010920">
    <property type="entry name" value="LSM_dom_sf"/>
</dbReference>
<dbReference type="InterPro" id="IPR047575">
    <property type="entry name" value="Sm"/>
</dbReference>
<dbReference type="NCBIfam" id="TIGR02383">
    <property type="entry name" value="Hfq"/>
    <property type="match status" value="1"/>
</dbReference>
<dbReference type="NCBIfam" id="NF001602">
    <property type="entry name" value="PRK00395.1"/>
    <property type="match status" value="1"/>
</dbReference>
<dbReference type="PANTHER" id="PTHR34772">
    <property type="entry name" value="RNA-BINDING PROTEIN HFQ"/>
    <property type="match status" value="1"/>
</dbReference>
<dbReference type="PANTHER" id="PTHR34772:SF1">
    <property type="entry name" value="RNA-BINDING PROTEIN HFQ"/>
    <property type="match status" value="1"/>
</dbReference>
<dbReference type="Pfam" id="PF17209">
    <property type="entry name" value="Hfq"/>
    <property type="match status" value="1"/>
</dbReference>
<dbReference type="SUPFAM" id="SSF50182">
    <property type="entry name" value="Sm-like ribonucleoproteins"/>
    <property type="match status" value="1"/>
</dbReference>
<dbReference type="PROSITE" id="PS52002">
    <property type="entry name" value="SM"/>
    <property type="match status" value="1"/>
</dbReference>
<feature type="chain" id="PRO_1000080657" description="RNA-binding protein Hfq">
    <location>
        <begin position="1"/>
        <end position="78"/>
    </location>
</feature>
<feature type="domain" description="Sm" evidence="2">
    <location>
        <begin position="10"/>
        <end position="70"/>
    </location>
</feature>
<accession>A9M5C4</accession>
<comment type="function">
    <text evidence="1">RNA chaperone that binds small regulatory RNA (sRNAs) and mRNAs to facilitate mRNA translational regulation in response to envelope stress, environmental stress and changes in metabolite concentrations. Also binds with high specificity to tRNAs.</text>
</comment>
<comment type="subunit">
    <text evidence="1">Homohexamer.</text>
</comment>
<comment type="similarity">
    <text evidence="1">Belongs to the Hfq family.</text>
</comment>
<name>HFQ_BRUC2</name>